<feature type="chain" id="PRO_0000256058" description="Aldehyde dehydrogenase family 2 member C4">
    <location>
        <begin position="1"/>
        <end position="501"/>
    </location>
</feature>
<feature type="active site" description="Proton acceptor" evidence="2 3">
    <location>
        <position position="268"/>
    </location>
</feature>
<feature type="active site" description="Nucleophile" evidence="2 3">
    <location>
        <position position="302"/>
    </location>
</feature>
<feature type="binding site" evidence="1">
    <location>
        <begin position="245"/>
        <end position="250"/>
    </location>
    <ligand>
        <name>NAD(+)</name>
        <dbReference type="ChEBI" id="CHEBI:57540"/>
    </ligand>
</feature>
<feature type="site" description="Transition state stabilizer" evidence="1">
    <location>
        <position position="169"/>
    </location>
</feature>
<feature type="mutagenesis site" description="In ref1-7; reduced activity on sinapaldehyde." evidence="5">
    <original>G</original>
    <variation>E</variation>
    <location>
        <position position="152"/>
    </location>
</feature>
<feature type="mutagenesis site" description="In ref1-6; reduced activity on sinapaldehyde." evidence="5">
    <original>G</original>
    <variation>R</variation>
    <location>
        <position position="416"/>
    </location>
</feature>
<accession>Q56YU0</accession>
<accession>Q9LV57</accession>
<protein>
    <recommendedName>
        <fullName>Aldehyde dehydrogenase family 2 member C4</fullName>
        <ecNumber>1.2.1.3</ecNumber>
    </recommendedName>
    <alternativeName>
        <fullName>ALDH1a</fullName>
    </alternativeName>
    <alternativeName>
        <fullName>Protein REDUCED EPIDERMAL FLUORESCENCE 1</fullName>
    </alternativeName>
</protein>
<dbReference type="EC" id="1.2.1.3"/>
<dbReference type="EMBL" id="AF349448">
    <property type="protein sequence ID" value="AAM27004.1"/>
    <property type="molecule type" value="mRNA"/>
</dbReference>
<dbReference type="EMBL" id="AB020746">
    <property type="protein sequence ID" value="BAB01998.1"/>
    <property type="molecule type" value="Genomic_DNA"/>
</dbReference>
<dbReference type="EMBL" id="CP002686">
    <property type="protein sequence ID" value="AEE76907.1"/>
    <property type="molecule type" value="Genomic_DNA"/>
</dbReference>
<dbReference type="EMBL" id="AY056398">
    <property type="protein sequence ID" value="AAL08254.1"/>
    <property type="molecule type" value="mRNA"/>
</dbReference>
<dbReference type="EMBL" id="AK221230">
    <property type="protein sequence ID" value="BAD93825.1"/>
    <property type="molecule type" value="mRNA"/>
</dbReference>
<dbReference type="RefSeq" id="NP_566749.1">
    <property type="nucleotide sequence ID" value="NM_113359.4"/>
</dbReference>
<dbReference type="SMR" id="Q56YU0"/>
<dbReference type="BioGRID" id="7373">
    <property type="interactions" value="3"/>
</dbReference>
<dbReference type="FunCoup" id="Q56YU0">
    <property type="interactions" value="715"/>
</dbReference>
<dbReference type="IntAct" id="Q56YU0">
    <property type="interactions" value="1"/>
</dbReference>
<dbReference type="STRING" id="3702.Q56YU0"/>
<dbReference type="iPTMnet" id="Q56YU0"/>
<dbReference type="MetOSite" id="Q56YU0"/>
<dbReference type="PaxDb" id="3702-AT3G24503.1"/>
<dbReference type="ProteomicsDB" id="244722"/>
<dbReference type="EnsemblPlants" id="AT3G24503.1">
    <property type="protein sequence ID" value="AT3G24503.1"/>
    <property type="gene ID" value="AT3G24503"/>
</dbReference>
<dbReference type="GeneID" id="822042"/>
<dbReference type="Gramene" id="AT3G24503.1">
    <property type="protein sequence ID" value="AT3G24503.1"/>
    <property type="gene ID" value="AT3G24503"/>
</dbReference>
<dbReference type="KEGG" id="ath:AT3G24503"/>
<dbReference type="Araport" id="AT3G24503"/>
<dbReference type="TAIR" id="AT3G24503">
    <property type="gene designation" value="ALDH2C4"/>
</dbReference>
<dbReference type="eggNOG" id="KOG2450">
    <property type="taxonomic scope" value="Eukaryota"/>
</dbReference>
<dbReference type="HOGENOM" id="CLU_005391_0_0_1"/>
<dbReference type="InParanoid" id="Q56YU0"/>
<dbReference type="OMA" id="GTYAINW"/>
<dbReference type="OrthoDB" id="310895at2759"/>
<dbReference type="PhylomeDB" id="Q56YU0"/>
<dbReference type="PRO" id="PR:Q56YU0"/>
<dbReference type="Proteomes" id="UP000006548">
    <property type="component" value="Chromosome 3"/>
</dbReference>
<dbReference type="ExpressionAtlas" id="Q56YU0">
    <property type="expression patterns" value="baseline and differential"/>
</dbReference>
<dbReference type="GO" id="GO:0005829">
    <property type="term" value="C:cytosol"/>
    <property type="evidence" value="ECO:0007005"/>
    <property type="project" value="TAIR"/>
</dbReference>
<dbReference type="GO" id="GO:0004029">
    <property type="term" value="F:aldehyde dehydrogenase (NAD+) activity"/>
    <property type="evidence" value="ECO:0000250"/>
    <property type="project" value="TAIR"/>
</dbReference>
<dbReference type="GO" id="GO:0050269">
    <property type="term" value="F:coniferyl-aldehyde dehydrogenase [NAD(P)+] activity"/>
    <property type="evidence" value="ECO:0000314"/>
    <property type="project" value="TAIR"/>
</dbReference>
<dbReference type="GO" id="GO:0009699">
    <property type="term" value="P:phenylpropanoid biosynthetic process"/>
    <property type="evidence" value="ECO:0000314"/>
    <property type="project" value="TAIR"/>
</dbReference>
<dbReference type="CDD" id="cd07142">
    <property type="entry name" value="ALDH_F2BC"/>
    <property type="match status" value="1"/>
</dbReference>
<dbReference type="FunFam" id="3.40.605.10:FF:000011">
    <property type="entry name" value="ALD5p Mitochondrial aldehyde dehydrogenase"/>
    <property type="match status" value="1"/>
</dbReference>
<dbReference type="FunFam" id="3.40.309.10:FF:000065">
    <property type="entry name" value="Aldehyde dehydrogenase3"/>
    <property type="match status" value="1"/>
</dbReference>
<dbReference type="Gene3D" id="3.40.605.10">
    <property type="entry name" value="Aldehyde Dehydrogenase, Chain A, domain 1"/>
    <property type="match status" value="1"/>
</dbReference>
<dbReference type="Gene3D" id="3.40.309.10">
    <property type="entry name" value="Aldehyde Dehydrogenase, Chain A, domain 2"/>
    <property type="match status" value="1"/>
</dbReference>
<dbReference type="InterPro" id="IPR016161">
    <property type="entry name" value="Ald_DH/histidinol_DH"/>
</dbReference>
<dbReference type="InterPro" id="IPR016163">
    <property type="entry name" value="Ald_DH_C"/>
</dbReference>
<dbReference type="InterPro" id="IPR016160">
    <property type="entry name" value="Ald_DH_CS_CYS"/>
</dbReference>
<dbReference type="InterPro" id="IPR029510">
    <property type="entry name" value="Ald_DH_CS_GLU"/>
</dbReference>
<dbReference type="InterPro" id="IPR016162">
    <property type="entry name" value="Ald_DH_N"/>
</dbReference>
<dbReference type="InterPro" id="IPR015590">
    <property type="entry name" value="Aldehyde_DH_dom"/>
</dbReference>
<dbReference type="PANTHER" id="PTHR11699">
    <property type="entry name" value="ALDEHYDE DEHYDROGENASE-RELATED"/>
    <property type="match status" value="1"/>
</dbReference>
<dbReference type="Pfam" id="PF00171">
    <property type="entry name" value="Aldedh"/>
    <property type="match status" value="1"/>
</dbReference>
<dbReference type="SUPFAM" id="SSF53720">
    <property type="entry name" value="ALDH-like"/>
    <property type="match status" value="1"/>
</dbReference>
<dbReference type="PROSITE" id="PS00070">
    <property type="entry name" value="ALDEHYDE_DEHYDR_CYS"/>
    <property type="match status" value="1"/>
</dbReference>
<dbReference type="PROSITE" id="PS00687">
    <property type="entry name" value="ALDEHYDE_DEHYDR_GLU"/>
    <property type="match status" value="1"/>
</dbReference>
<proteinExistence type="evidence at protein level"/>
<name>AL2C4_ARATH</name>
<gene>
    <name type="primary">ALDH2C4</name>
    <name type="synonym">REF1</name>
    <name type="ordered locus">At3g24503</name>
    <name type="ORF">MOB24.3</name>
</gene>
<organism>
    <name type="scientific">Arabidopsis thaliana</name>
    <name type="common">Mouse-ear cress</name>
    <dbReference type="NCBI Taxonomy" id="3702"/>
    <lineage>
        <taxon>Eukaryota</taxon>
        <taxon>Viridiplantae</taxon>
        <taxon>Streptophyta</taxon>
        <taxon>Embryophyta</taxon>
        <taxon>Tracheophyta</taxon>
        <taxon>Spermatophyta</taxon>
        <taxon>Magnoliopsida</taxon>
        <taxon>eudicotyledons</taxon>
        <taxon>Gunneridae</taxon>
        <taxon>Pentapetalae</taxon>
        <taxon>rosids</taxon>
        <taxon>malvids</taxon>
        <taxon>Brassicales</taxon>
        <taxon>Brassicaceae</taxon>
        <taxon>Camelineae</taxon>
        <taxon>Arabidopsis</taxon>
    </lineage>
</organism>
<keyword id="KW-0963">Cytoplasm</keyword>
<keyword id="KW-0520">NAD</keyword>
<keyword id="KW-0560">Oxidoreductase</keyword>
<keyword id="KW-1185">Reference proteome</keyword>
<evidence type="ECO:0000250" key="1"/>
<evidence type="ECO:0000255" key="2">
    <source>
        <dbReference type="PROSITE-ProRule" id="PRU10007"/>
    </source>
</evidence>
<evidence type="ECO:0000255" key="3">
    <source>
        <dbReference type="PROSITE-ProRule" id="PRU10008"/>
    </source>
</evidence>
<evidence type="ECO:0000269" key="4">
    <source>
    </source>
</evidence>
<evidence type="ECO:0000269" key="5">
    <source>
    </source>
</evidence>
<evidence type="ECO:0000305" key="6"/>
<reference key="1">
    <citation type="journal article" date="2002" name="Plant Mol. Biol.">
        <title>Characterization of the aldehyde dehydrogenase gene families of Zea mays and Arabidopsis.</title>
        <authorList>
            <person name="Skibbe D.S."/>
            <person name="Liu F."/>
            <person name="Wen T.-J."/>
            <person name="Yandeau M.D."/>
            <person name="Cui X."/>
            <person name="Cao J."/>
            <person name="Simmons C.R."/>
            <person name="Schnable P.S."/>
        </authorList>
    </citation>
    <scope>NUCLEOTIDE SEQUENCE [MRNA]</scope>
    <scope>FUNCTION</scope>
</reference>
<reference key="2">
    <citation type="journal article" date="2000" name="DNA Res.">
        <title>Structural analysis of Arabidopsis thaliana chromosome 3. II. Sequence features of the 4,251,695 bp regions covered by 90 P1, TAC and BAC clones.</title>
        <authorList>
            <person name="Kaneko T."/>
            <person name="Katoh T."/>
            <person name="Sato S."/>
            <person name="Nakamura Y."/>
            <person name="Asamizu E."/>
            <person name="Tabata S."/>
        </authorList>
    </citation>
    <scope>NUCLEOTIDE SEQUENCE [LARGE SCALE GENOMIC DNA]</scope>
    <source>
        <strain>cv. Columbia</strain>
    </source>
</reference>
<reference key="3">
    <citation type="journal article" date="2017" name="Plant J.">
        <title>Araport11: a complete reannotation of the Arabidopsis thaliana reference genome.</title>
        <authorList>
            <person name="Cheng C.Y."/>
            <person name="Krishnakumar V."/>
            <person name="Chan A.P."/>
            <person name="Thibaud-Nissen F."/>
            <person name="Schobel S."/>
            <person name="Town C.D."/>
        </authorList>
    </citation>
    <scope>GENOME REANNOTATION</scope>
    <source>
        <strain>cv. Columbia</strain>
    </source>
</reference>
<reference key="4">
    <citation type="journal article" date="2003" name="Science">
        <title>Empirical analysis of transcriptional activity in the Arabidopsis genome.</title>
        <authorList>
            <person name="Yamada K."/>
            <person name="Lim J."/>
            <person name="Dale J.M."/>
            <person name="Chen H."/>
            <person name="Shinn P."/>
            <person name="Palm C.J."/>
            <person name="Southwick A.M."/>
            <person name="Wu H.C."/>
            <person name="Kim C.J."/>
            <person name="Nguyen M."/>
            <person name="Pham P.K."/>
            <person name="Cheuk R.F."/>
            <person name="Karlin-Newmann G."/>
            <person name="Liu S.X."/>
            <person name="Lam B."/>
            <person name="Sakano H."/>
            <person name="Wu T."/>
            <person name="Yu G."/>
            <person name="Miranda M."/>
            <person name="Quach H.L."/>
            <person name="Tripp M."/>
            <person name="Chang C.H."/>
            <person name="Lee J.M."/>
            <person name="Toriumi M.J."/>
            <person name="Chan M.M."/>
            <person name="Tang C.C."/>
            <person name="Onodera C.S."/>
            <person name="Deng J.M."/>
            <person name="Akiyama K."/>
            <person name="Ansari Y."/>
            <person name="Arakawa T."/>
            <person name="Banh J."/>
            <person name="Banno F."/>
            <person name="Bowser L."/>
            <person name="Brooks S.Y."/>
            <person name="Carninci P."/>
            <person name="Chao Q."/>
            <person name="Choy N."/>
            <person name="Enju A."/>
            <person name="Goldsmith A.D."/>
            <person name="Gurjal M."/>
            <person name="Hansen N.F."/>
            <person name="Hayashizaki Y."/>
            <person name="Johnson-Hopson C."/>
            <person name="Hsuan V.W."/>
            <person name="Iida K."/>
            <person name="Karnes M."/>
            <person name="Khan S."/>
            <person name="Koesema E."/>
            <person name="Ishida J."/>
            <person name="Jiang P.X."/>
            <person name="Jones T."/>
            <person name="Kawai J."/>
            <person name="Kamiya A."/>
            <person name="Meyers C."/>
            <person name="Nakajima M."/>
            <person name="Narusaka M."/>
            <person name="Seki M."/>
            <person name="Sakurai T."/>
            <person name="Satou M."/>
            <person name="Tamse R."/>
            <person name="Vaysberg M."/>
            <person name="Wallender E.K."/>
            <person name="Wong C."/>
            <person name="Yamamura Y."/>
            <person name="Yuan S."/>
            <person name="Shinozaki K."/>
            <person name="Davis R.W."/>
            <person name="Theologis A."/>
            <person name="Ecker J.R."/>
        </authorList>
    </citation>
    <scope>NUCLEOTIDE SEQUENCE [LARGE SCALE MRNA]</scope>
    <source>
        <strain>cv. Columbia</strain>
    </source>
</reference>
<reference key="5">
    <citation type="submission" date="2005-03" db="EMBL/GenBank/DDBJ databases">
        <title>Large-scale analysis of RIKEN Arabidopsis full-length (RAFL) cDNAs.</title>
        <authorList>
            <person name="Totoki Y."/>
            <person name="Seki M."/>
            <person name="Ishida J."/>
            <person name="Nakajima M."/>
            <person name="Enju A."/>
            <person name="Kamiya A."/>
            <person name="Narusaka M."/>
            <person name="Shin-i T."/>
            <person name="Nakagawa M."/>
            <person name="Sakamoto N."/>
            <person name="Oishi K."/>
            <person name="Kohara Y."/>
            <person name="Kobayashi M."/>
            <person name="Toyoda A."/>
            <person name="Sakaki Y."/>
            <person name="Sakurai T."/>
            <person name="Iida K."/>
            <person name="Akiyama K."/>
            <person name="Satou M."/>
            <person name="Toyoda T."/>
            <person name="Konagaya A."/>
            <person name="Carninci P."/>
            <person name="Kawai J."/>
            <person name="Hayashizaki Y."/>
            <person name="Shinozaki K."/>
        </authorList>
    </citation>
    <scope>NUCLEOTIDE SEQUENCE [LARGE SCALE MRNA] OF 322-501</scope>
    <source>
        <strain>cv. Columbia</strain>
    </source>
</reference>
<reference key="6">
    <citation type="journal article" date="2004" name="Plant Cell">
        <title>The Arabidopsis thaliana REDUCED EPIDERMAL FLUORESCENCE1 gene encodes an aldehyde dehydrogenase involved in ferulic acid and sinapic acid biosynthesis.</title>
        <authorList>
            <person name="Nair R.B."/>
            <person name="Bastress K.L."/>
            <person name="Ruegger M.O."/>
            <person name="Denault J.W."/>
            <person name="Chapple C."/>
        </authorList>
    </citation>
    <scope>FUNCTION</scope>
    <scope>MUTAGENESIS OF GLY-152 AND GLY-416</scope>
</reference>
<reference key="7">
    <citation type="journal article" date="2004" name="Trends Plant Sci.">
        <title>The ALDH gene superfamily of Arabidopsis.</title>
        <authorList>
            <person name="Kirch H.-H."/>
            <person name="Bartels D."/>
            <person name="Wei Y."/>
            <person name="Schnable P.S."/>
            <person name="Wood A.J."/>
        </authorList>
    </citation>
    <scope>NOMENCLATURE</scope>
</reference>
<sequence>MENGKCNGATTVKLPEIKFTKLFINGQFIDAASGKTFETIDPRNGEVIATIAEGDKEDVDLAVNAARYAFDHGPWPRMTGFERAKLINKFADLIEENIEELAKLDAVDGGKLFQLGKYADIPATAGHFRYNAGAADKIHGETLKMTRQSLFGYTLKEPIGVVGNIIPWNFPSIMFATKVAPAMAAGCTMVVKPAEQTSLSALFYAHLSKEAGIPDGVLNIVTGFGSTAGAAIASHMDVDKVSFTGSTDVGRKIMQAAAASNLKKVSLELGGKSPLLIFNDADIDKAADLALLGCFYNKGEICVASSRVFVQEGIYDKVVEKLVEKAKDWTVGDPFDSTARQGPQVDKRQFEKILSYIEHGKNEGATLLTGGKAIGDKGYFIQPTIFADVTEDMKIYQDEIFGPVMSLMKFKTVEEGIKCANNTKYGLAAGILSQDIDLINTVSRSIKAGIIWVNCYFGFDLDCPYGGYKMSGNCRESGMDALDNYLQTKSVVMPLHNSPWM</sequence>
<comment type="function">
    <text evidence="4 5">Involved in ferulic acid and sinapic acid biosynthesis by oxidation of conyferylaldehyde and sinapaldehyde, respectively. Can oxidize L-lactaldehyde. Possesses activity on acetaldehyde and glycolaldehyde in vitro.</text>
</comment>
<comment type="catalytic activity">
    <reaction>
        <text>an aldehyde + NAD(+) + H2O = a carboxylate + NADH + 2 H(+)</text>
        <dbReference type="Rhea" id="RHEA:16185"/>
        <dbReference type="ChEBI" id="CHEBI:15377"/>
        <dbReference type="ChEBI" id="CHEBI:15378"/>
        <dbReference type="ChEBI" id="CHEBI:17478"/>
        <dbReference type="ChEBI" id="CHEBI:29067"/>
        <dbReference type="ChEBI" id="CHEBI:57540"/>
        <dbReference type="ChEBI" id="CHEBI:57945"/>
        <dbReference type="EC" id="1.2.1.3"/>
    </reaction>
</comment>
<comment type="subunit">
    <text evidence="1">Homotetramer.</text>
</comment>
<comment type="subcellular location">
    <subcellularLocation>
        <location evidence="6">Cytoplasm</location>
        <location evidence="6">Cytosol</location>
    </subcellularLocation>
</comment>
<comment type="similarity">
    <text evidence="6">Belongs to the aldehyde dehydrogenase family.</text>
</comment>